<gene>
    <name evidence="1" type="primary">mshD</name>
    <name type="ordered locus">Mvan_5096</name>
</gene>
<comment type="function">
    <text evidence="1">Catalyzes the transfer of acetyl from acetyl-CoA to desacetylmycothiol (Cys-GlcN-Ins) to form mycothiol.</text>
</comment>
<comment type="catalytic activity">
    <reaction evidence="1">
        <text>1D-myo-inositol 2-(L-cysteinylamino)-2-deoxy-alpha-D-glucopyranoside + acetyl-CoA = mycothiol + CoA + H(+)</text>
        <dbReference type="Rhea" id="RHEA:26172"/>
        <dbReference type="ChEBI" id="CHEBI:15378"/>
        <dbReference type="ChEBI" id="CHEBI:16768"/>
        <dbReference type="ChEBI" id="CHEBI:57287"/>
        <dbReference type="ChEBI" id="CHEBI:57288"/>
        <dbReference type="ChEBI" id="CHEBI:58887"/>
        <dbReference type="EC" id="2.3.1.189"/>
    </reaction>
</comment>
<comment type="subunit">
    <text evidence="1">Monomer.</text>
</comment>
<comment type="similarity">
    <text evidence="1">Belongs to the acetyltransferase family. MshD subfamily.</text>
</comment>
<dbReference type="EC" id="2.3.1.189" evidence="1"/>
<dbReference type="EMBL" id="CP000511">
    <property type="protein sequence ID" value="ABM15867.1"/>
    <property type="molecule type" value="Genomic_DNA"/>
</dbReference>
<dbReference type="RefSeq" id="WP_011782237.1">
    <property type="nucleotide sequence ID" value="NZ_JACKSD010000224.1"/>
</dbReference>
<dbReference type="SMR" id="A1TFB7"/>
<dbReference type="STRING" id="350058.Mvan_5096"/>
<dbReference type="KEGG" id="mva:Mvan_5096"/>
<dbReference type="eggNOG" id="COG0456">
    <property type="taxonomic scope" value="Bacteria"/>
</dbReference>
<dbReference type="HOGENOM" id="CLU_068014_0_0_11"/>
<dbReference type="Proteomes" id="UP000009159">
    <property type="component" value="Chromosome"/>
</dbReference>
<dbReference type="GO" id="GO:0035447">
    <property type="term" value="F:mycothiol synthase activity"/>
    <property type="evidence" value="ECO:0007669"/>
    <property type="project" value="UniProtKB-UniRule"/>
</dbReference>
<dbReference type="GO" id="GO:0008999">
    <property type="term" value="F:protein-N-terminal-alanine acetyltransferase activity"/>
    <property type="evidence" value="ECO:0007669"/>
    <property type="project" value="TreeGrafter"/>
</dbReference>
<dbReference type="GO" id="GO:0010125">
    <property type="term" value="P:mycothiol biosynthetic process"/>
    <property type="evidence" value="ECO:0007669"/>
    <property type="project" value="UniProtKB-UniRule"/>
</dbReference>
<dbReference type="CDD" id="cd04301">
    <property type="entry name" value="NAT_SF"/>
    <property type="match status" value="1"/>
</dbReference>
<dbReference type="Gene3D" id="3.40.630.30">
    <property type="match status" value="1"/>
</dbReference>
<dbReference type="HAMAP" id="MF_01698">
    <property type="entry name" value="MshD"/>
    <property type="match status" value="1"/>
</dbReference>
<dbReference type="InterPro" id="IPR016181">
    <property type="entry name" value="Acyl_CoA_acyltransferase"/>
</dbReference>
<dbReference type="InterPro" id="IPR000182">
    <property type="entry name" value="GNAT_dom"/>
</dbReference>
<dbReference type="InterPro" id="IPR050276">
    <property type="entry name" value="MshD_Acetyltransferase"/>
</dbReference>
<dbReference type="InterPro" id="IPR017813">
    <property type="entry name" value="Mycothiol_AcTrfase"/>
</dbReference>
<dbReference type="NCBIfam" id="TIGR03448">
    <property type="entry name" value="mycothiol_MshD"/>
    <property type="match status" value="1"/>
</dbReference>
<dbReference type="PANTHER" id="PTHR43617">
    <property type="entry name" value="L-AMINO ACID N-ACETYLTRANSFERASE"/>
    <property type="match status" value="1"/>
</dbReference>
<dbReference type="PANTHER" id="PTHR43617:SF31">
    <property type="entry name" value="MYCOTHIOL ACETYLTRANSFERASE"/>
    <property type="match status" value="1"/>
</dbReference>
<dbReference type="Pfam" id="PF00583">
    <property type="entry name" value="Acetyltransf_1"/>
    <property type="match status" value="2"/>
</dbReference>
<dbReference type="PIRSF" id="PIRSF021524">
    <property type="entry name" value="MSH_acetyltransferase"/>
    <property type="match status" value="1"/>
</dbReference>
<dbReference type="SUPFAM" id="SSF55729">
    <property type="entry name" value="Acyl-CoA N-acyltransferases (Nat)"/>
    <property type="match status" value="1"/>
</dbReference>
<dbReference type="PROSITE" id="PS51186">
    <property type="entry name" value="GNAT"/>
    <property type="match status" value="2"/>
</dbReference>
<keyword id="KW-0012">Acyltransferase</keyword>
<keyword id="KW-0677">Repeat</keyword>
<keyword id="KW-0808">Transferase</keyword>
<accession>A1TFB7</accession>
<reference key="1">
    <citation type="submission" date="2006-12" db="EMBL/GenBank/DDBJ databases">
        <title>Complete sequence of Mycobacterium vanbaalenii PYR-1.</title>
        <authorList>
            <consortium name="US DOE Joint Genome Institute"/>
            <person name="Copeland A."/>
            <person name="Lucas S."/>
            <person name="Lapidus A."/>
            <person name="Barry K."/>
            <person name="Detter J.C."/>
            <person name="Glavina del Rio T."/>
            <person name="Hammon N."/>
            <person name="Israni S."/>
            <person name="Dalin E."/>
            <person name="Tice H."/>
            <person name="Pitluck S."/>
            <person name="Singan V."/>
            <person name="Schmutz J."/>
            <person name="Larimer F."/>
            <person name="Land M."/>
            <person name="Hauser L."/>
            <person name="Kyrpides N."/>
            <person name="Anderson I.J."/>
            <person name="Miller C."/>
            <person name="Richardson P."/>
        </authorList>
    </citation>
    <scope>NUCLEOTIDE SEQUENCE [LARGE SCALE GENOMIC DNA]</scope>
    <source>
        <strain>DSM 7251 / JCM 13017 / BCRC 16820 / KCTC 9966 / NRRL B-24157 / PYR-1</strain>
    </source>
</reference>
<feature type="chain" id="PRO_0000400283" description="Mycothiol acetyltransferase">
    <location>
        <begin position="1"/>
        <end position="301"/>
    </location>
</feature>
<feature type="domain" description="N-acetyltransferase 1" evidence="1">
    <location>
        <begin position="7"/>
        <end position="150"/>
    </location>
</feature>
<feature type="domain" description="N-acetyltransferase 2" evidence="1">
    <location>
        <begin position="152"/>
        <end position="301"/>
    </location>
</feature>
<feature type="binding site" evidence="1">
    <location>
        <position position="39"/>
    </location>
    <ligand>
        <name>1D-myo-inositol 2-(L-cysteinylamino)-2-deoxy-alpha-D-glucopyranoside</name>
        <dbReference type="ChEBI" id="CHEBI:58887"/>
    </ligand>
</feature>
<feature type="binding site" evidence="1">
    <location>
        <begin position="80"/>
        <end position="82"/>
    </location>
    <ligand>
        <name>acetyl-CoA</name>
        <dbReference type="ChEBI" id="CHEBI:57288"/>
        <label>1</label>
    </ligand>
</feature>
<feature type="binding site" evidence="1">
    <location>
        <begin position="88"/>
        <end position="93"/>
    </location>
    <ligand>
        <name>acetyl-CoA</name>
        <dbReference type="ChEBI" id="CHEBI:57288"/>
        <label>1</label>
    </ligand>
</feature>
<feature type="binding site" evidence="1">
    <location>
        <position position="179"/>
    </location>
    <ligand>
        <name>1D-myo-inositol 2-(L-cysteinylamino)-2-deoxy-alpha-D-glucopyranoside</name>
        <dbReference type="ChEBI" id="CHEBI:58887"/>
    </ligand>
</feature>
<feature type="binding site" evidence="1">
    <location>
        <position position="220"/>
    </location>
    <ligand>
        <name>1D-myo-inositol 2-(L-cysteinylamino)-2-deoxy-alpha-D-glucopyranoside</name>
        <dbReference type="ChEBI" id="CHEBI:58887"/>
    </ligand>
</feature>
<feature type="binding site" evidence="1">
    <location>
        <position position="228"/>
    </location>
    <ligand>
        <name>1D-myo-inositol 2-(L-cysteinylamino)-2-deoxy-alpha-D-glucopyranoside</name>
        <dbReference type="ChEBI" id="CHEBI:58887"/>
    </ligand>
</feature>
<feature type="binding site" evidence="1">
    <location>
        <begin position="232"/>
        <end position="234"/>
    </location>
    <ligand>
        <name>acetyl-CoA</name>
        <dbReference type="ChEBI" id="CHEBI:57288"/>
        <label>2</label>
    </ligand>
</feature>
<feature type="binding site" evidence="1">
    <location>
        <position position="271"/>
    </location>
    <ligand>
        <name>1D-myo-inositol 2-(L-cysteinylamino)-2-deoxy-alpha-D-glucopyranoside</name>
        <dbReference type="ChEBI" id="CHEBI:58887"/>
    </ligand>
</feature>
<feature type="binding site" evidence="1">
    <location>
        <begin position="276"/>
        <end position="281"/>
    </location>
    <ligand>
        <name>acetyl-CoA</name>
        <dbReference type="ChEBI" id="CHEBI:57288"/>
        <label>2</label>
    </ligand>
</feature>
<name>MSHD_MYCVP</name>
<sequence>MTSQDSVDWQDVLPVDERQRIRDLISDATSADGVAPVGDQVLRELGQQRTRHLVALQDGALRGYLNLAPAGDGAPPMAELVVHPDARRRGIGSAMIRTALSVGGPDTRIWAHGDLEPARATAAALGLSAVRELLQMRRSLADLPTAPPVDGVRFATYAGPQDDAEVLRVNNAAFSWHPEQGGWTEADIAERRDEQWFDPDGFFLAFDEDSGRLLGFHWTKVHSATLGEVYVVGVDTAAQGRGLGGALTLIGLHHLADRLLSSGHDADVMLYVEADNTAAVKTYRRLGFEVVNTDVAYAVEG</sequence>
<proteinExistence type="inferred from homology"/>
<evidence type="ECO:0000255" key="1">
    <source>
        <dbReference type="HAMAP-Rule" id="MF_01698"/>
    </source>
</evidence>
<protein>
    <recommendedName>
        <fullName evidence="1">Mycothiol acetyltransferase</fullName>
        <shortName evidence="1">MSH acetyltransferase</shortName>
        <ecNumber evidence="1">2.3.1.189</ecNumber>
    </recommendedName>
    <alternativeName>
        <fullName evidence="1">Mycothiol synthase</fullName>
    </alternativeName>
</protein>
<organism>
    <name type="scientific">Mycolicibacterium vanbaalenii (strain DSM 7251 / JCM 13017 / BCRC 16820 / KCTC 9966 / NRRL B-24157 / PYR-1)</name>
    <name type="common">Mycobacterium vanbaalenii</name>
    <dbReference type="NCBI Taxonomy" id="350058"/>
    <lineage>
        <taxon>Bacteria</taxon>
        <taxon>Bacillati</taxon>
        <taxon>Actinomycetota</taxon>
        <taxon>Actinomycetes</taxon>
        <taxon>Mycobacteriales</taxon>
        <taxon>Mycobacteriaceae</taxon>
        <taxon>Mycolicibacterium</taxon>
    </lineage>
</organism>